<reference key="1">
    <citation type="journal article" date="1989" name="Science">
        <title>Selective amplification and cloning of four new members of the G protein-coupled receptor family.</title>
        <authorList>
            <person name="Libert F."/>
            <person name="Parmentier M."/>
            <person name="Lefort A."/>
            <person name="Dinsart C."/>
            <person name="van Sande J."/>
            <person name="Maenhaut C."/>
            <person name="Simons M.-J."/>
            <person name="Dumont J.E."/>
            <person name="Vassart G."/>
        </authorList>
    </citation>
    <scope>NUCLEOTIDE SEQUENCE [MRNA]</scope>
    <source>
        <tissue>Thyroid</tissue>
    </source>
</reference>
<reference key="2">
    <citation type="journal article" date="1990" name="Nucleic Acids Res.">
        <title>Complete nucleotide sequence of a putative G protein coupled receptor: RDC8.</title>
        <authorList>
            <person name="Libert F."/>
            <person name="Parmentier M."/>
            <person name="Lefort A."/>
            <person name="Dumont J.E."/>
            <person name="Vassart G."/>
        </authorList>
    </citation>
    <scope>NUCLEOTIDE SEQUENCE [MRNA]</scope>
    <source>
        <tissue>Thyroid</tissue>
    </source>
</reference>
<reference key="3">
    <citation type="journal article" date="1990" name="Biochem. Biophys. Res. Commun.">
        <title>RDC8 codes for an adenosine A2 receptor with physiological constitutive activity.</title>
        <authorList>
            <person name="Maenhaut C."/>
            <person name="van Sande J."/>
            <person name="Libert F."/>
            <person name="Abramowicz M."/>
            <person name="Parmentier M."/>
            <person name="Vanderhaegen J.-J."/>
            <person name="Dumont J.E."/>
            <person name="Vassart G."/>
            <person name="Schiffmann S."/>
        </authorList>
    </citation>
    <scope>FUNCTION</scope>
</reference>
<accession>P11617</accession>
<dbReference type="EMBL" id="X14052">
    <property type="protein sequence ID" value="CAA32210.1"/>
    <property type="molecule type" value="mRNA"/>
</dbReference>
<dbReference type="PIR" id="D30341">
    <property type="entry name" value="D30341"/>
</dbReference>
<dbReference type="RefSeq" id="NP_001003278.1">
    <property type="nucleotide sequence ID" value="NM_001003278.1"/>
</dbReference>
<dbReference type="SMR" id="P11617"/>
<dbReference type="FunCoup" id="P11617">
    <property type="interactions" value="299"/>
</dbReference>
<dbReference type="STRING" id="9615.ENSCAFP00000020374"/>
<dbReference type="GlyCosmos" id="P11617">
    <property type="glycosylation" value="2 sites, No reported glycans"/>
</dbReference>
<dbReference type="iPTMnet" id="P11617"/>
<dbReference type="PaxDb" id="9612-ENSCAFP00000020374"/>
<dbReference type="Ensembl" id="ENSCAFT00000021939.4">
    <property type="protein sequence ID" value="ENSCAFP00000020374.2"/>
    <property type="gene ID" value="ENSCAFG00000013828.4"/>
</dbReference>
<dbReference type="Ensembl" id="ENSCAFT00030040239.1">
    <property type="protein sequence ID" value="ENSCAFP00030035115.1"/>
    <property type="gene ID" value="ENSCAFG00030021927.1"/>
</dbReference>
<dbReference type="Ensembl" id="ENSCAFT00040033703.1">
    <property type="protein sequence ID" value="ENSCAFP00040029336.1"/>
    <property type="gene ID" value="ENSCAFG00040018245.1"/>
</dbReference>
<dbReference type="Ensembl" id="ENSCAFT00845039604.1">
    <property type="protein sequence ID" value="ENSCAFP00845031026.1"/>
    <property type="gene ID" value="ENSCAFG00845022393.1"/>
</dbReference>
<dbReference type="GeneID" id="403960"/>
<dbReference type="KEGG" id="cfa:403960"/>
<dbReference type="CTD" id="135"/>
<dbReference type="VEuPathDB" id="HostDB:ENSCAFG00845022393"/>
<dbReference type="VGNC" id="VGNC:37666">
    <property type="gene designation" value="ADORA2A"/>
</dbReference>
<dbReference type="eggNOG" id="KOG3656">
    <property type="taxonomic scope" value="Eukaryota"/>
</dbReference>
<dbReference type="GeneTree" id="ENSGT01030000234555"/>
<dbReference type="HOGENOM" id="CLU_009579_11_5_1"/>
<dbReference type="InParanoid" id="P11617"/>
<dbReference type="OMA" id="PPLWLMY"/>
<dbReference type="OrthoDB" id="9445642at2759"/>
<dbReference type="TreeFam" id="TF325296"/>
<dbReference type="Reactome" id="R-CFA-417973">
    <property type="pathway name" value="Adenosine P1 receptors"/>
</dbReference>
<dbReference type="Reactome" id="R-CFA-5683826">
    <property type="pathway name" value="Surfactant metabolism"/>
</dbReference>
<dbReference type="Proteomes" id="UP000002254">
    <property type="component" value="Chromosome 26"/>
</dbReference>
<dbReference type="Proteomes" id="UP000694429">
    <property type="component" value="Chromosome 26"/>
</dbReference>
<dbReference type="Proteomes" id="UP000694542">
    <property type="component" value="Chromosome 26"/>
</dbReference>
<dbReference type="Proteomes" id="UP000805418">
    <property type="component" value="Chromosome 26"/>
</dbReference>
<dbReference type="Bgee" id="ENSCAFG00000013828">
    <property type="expression patterns" value="Expressed in granulocyte and 46 other cell types or tissues"/>
</dbReference>
<dbReference type="GO" id="GO:0005886">
    <property type="term" value="C:plasma membrane"/>
    <property type="evidence" value="ECO:0000318"/>
    <property type="project" value="GO_Central"/>
</dbReference>
<dbReference type="GO" id="GO:0098794">
    <property type="term" value="C:postsynapse"/>
    <property type="evidence" value="ECO:0007669"/>
    <property type="project" value="GOC"/>
</dbReference>
<dbReference type="GO" id="GO:0005516">
    <property type="term" value="F:calmodulin binding"/>
    <property type="evidence" value="ECO:0007669"/>
    <property type="project" value="Ensembl"/>
</dbReference>
<dbReference type="GO" id="GO:0019899">
    <property type="term" value="F:enzyme binding"/>
    <property type="evidence" value="ECO:0007669"/>
    <property type="project" value="Ensembl"/>
</dbReference>
<dbReference type="GO" id="GO:0001609">
    <property type="term" value="F:G protein-coupled adenosine receptor activity"/>
    <property type="evidence" value="ECO:0000318"/>
    <property type="project" value="GO_Central"/>
</dbReference>
<dbReference type="GO" id="GO:0042802">
    <property type="term" value="F:identical protein binding"/>
    <property type="evidence" value="ECO:0007669"/>
    <property type="project" value="Ensembl"/>
</dbReference>
<dbReference type="GO" id="GO:0008289">
    <property type="term" value="F:lipid binding"/>
    <property type="evidence" value="ECO:0007669"/>
    <property type="project" value="Ensembl"/>
</dbReference>
<dbReference type="GO" id="GO:0007189">
    <property type="term" value="P:adenylate cyclase-activating G protein-coupled receptor signaling pathway"/>
    <property type="evidence" value="ECO:0000318"/>
    <property type="project" value="GO_Central"/>
</dbReference>
<dbReference type="GO" id="GO:0097190">
    <property type="term" value="P:apoptotic signaling pathway"/>
    <property type="evidence" value="ECO:0007669"/>
    <property type="project" value="Ensembl"/>
</dbReference>
<dbReference type="GO" id="GO:0042755">
    <property type="term" value="P:eating behavior"/>
    <property type="evidence" value="ECO:0007669"/>
    <property type="project" value="Ensembl"/>
</dbReference>
<dbReference type="GO" id="GO:0001973">
    <property type="term" value="P:G protein-coupled adenosine receptor signaling pathway"/>
    <property type="evidence" value="ECO:0000318"/>
    <property type="project" value="GO_Central"/>
</dbReference>
<dbReference type="GO" id="GO:0060080">
    <property type="term" value="P:inhibitory postsynaptic potential"/>
    <property type="evidence" value="ECO:0007669"/>
    <property type="project" value="Ensembl"/>
</dbReference>
<dbReference type="GO" id="GO:0007626">
    <property type="term" value="P:locomotory behavior"/>
    <property type="evidence" value="ECO:0007669"/>
    <property type="project" value="Ensembl"/>
</dbReference>
<dbReference type="GO" id="GO:0046636">
    <property type="term" value="P:negative regulation of alpha-beta T cell activation"/>
    <property type="evidence" value="ECO:0007669"/>
    <property type="project" value="Ensembl"/>
</dbReference>
<dbReference type="GO" id="GO:0050728">
    <property type="term" value="P:negative regulation of inflammatory response"/>
    <property type="evidence" value="ECO:0007669"/>
    <property type="project" value="Ensembl"/>
</dbReference>
<dbReference type="GO" id="GO:2001235">
    <property type="term" value="P:positive regulation of apoptotic signaling pathway"/>
    <property type="evidence" value="ECO:0007669"/>
    <property type="project" value="Ensembl"/>
</dbReference>
<dbReference type="GO" id="GO:0032230">
    <property type="term" value="P:positive regulation of synaptic transmission, GABAergic"/>
    <property type="evidence" value="ECO:0007669"/>
    <property type="project" value="Ensembl"/>
</dbReference>
<dbReference type="GO" id="GO:0001975">
    <property type="term" value="P:response to amphetamine"/>
    <property type="evidence" value="ECO:0007669"/>
    <property type="project" value="Ensembl"/>
</dbReference>
<dbReference type="GO" id="GO:0014074">
    <property type="term" value="P:response to purine-containing compound"/>
    <property type="evidence" value="ECO:0007669"/>
    <property type="project" value="Ensembl"/>
</dbReference>
<dbReference type="GO" id="GO:0001963">
    <property type="term" value="P:synaptic transmission, dopaminergic"/>
    <property type="evidence" value="ECO:0007669"/>
    <property type="project" value="Ensembl"/>
</dbReference>
<dbReference type="CDD" id="cd15068">
    <property type="entry name" value="7tmA_Adenosine_R_A2A"/>
    <property type="match status" value="1"/>
</dbReference>
<dbReference type="FunFam" id="1.20.1070.10:FF:000061">
    <property type="entry name" value="Adenosine receptor A2"/>
    <property type="match status" value="1"/>
</dbReference>
<dbReference type="Gene3D" id="1.20.1070.10">
    <property type="entry name" value="Rhodopsin 7-helix transmembrane proteins"/>
    <property type="match status" value="1"/>
</dbReference>
<dbReference type="InterPro" id="IPR001513">
    <property type="entry name" value="Adeno_A2A_rcpt"/>
</dbReference>
<dbReference type="InterPro" id="IPR001634">
    <property type="entry name" value="Adenosn_rcpt"/>
</dbReference>
<dbReference type="InterPro" id="IPR000276">
    <property type="entry name" value="GPCR_Rhodpsn"/>
</dbReference>
<dbReference type="InterPro" id="IPR017452">
    <property type="entry name" value="GPCR_Rhodpsn_7TM"/>
</dbReference>
<dbReference type="PANTHER" id="PTHR24246:SF47">
    <property type="entry name" value="ADENOSINE RECEPTOR A2A"/>
    <property type="match status" value="1"/>
</dbReference>
<dbReference type="PANTHER" id="PTHR24246">
    <property type="entry name" value="OLFACTORY RECEPTOR AND ADENOSINE RECEPTOR"/>
    <property type="match status" value="1"/>
</dbReference>
<dbReference type="Pfam" id="PF00001">
    <property type="entry name" value="7tm_1"/>
    <property type="match status" value="1"/>
</dbReference>
<dbReference type="PRINTS" id="PR00553">
    <property type="entry name" value="ADENOSINA2AR"/>
</dbReference>
<dbReference type="PRINTS" id="PR00424">
    <property type="entry name" value="ADENOSINER"/>
</dbReference>
<dbReference type="PRINTS" id="PR00237">
    <property type="entry name" value="GPCRRHODOPSN"/>
</dbReference>
<dbReference type="SMART" id="SM01381">
    <property type="entry name" value="7TM_GPCR_Srsx"/>
    <property type="match status" value="1"/>
</dbReference>
<dbReference type="SUPFAM" id="SSF81321">
    <property type="entry name" value="Family A G protein-coupled receptor-like"/>
    <property type="match status" value="1"/>
</dbReference>
<dbReference type="PROSITE" id="PS00237">
    <property type="entry name" value="G_PROTEIN_RECEP_F1_1"/>
    <property type="match status" value="1"/>
</dbReference>
<dbReference type="PROSITE" id="PS50262">
    <property type="entry name" value="G_PROTEIN_RECEP_F1_2"/>
    <property type="match status" value="1"/>
</dbReference>
<name>AA2AR_CANLF</name>
<keyword id="KW-1003">Cell membrane</keyword>
<keyword id="KW-1015">Disulfide bond</keyword>
<keyword id="KW-0297">G-protein coupled receptor</keyword>
<keyword id="KW-0325">Glycoprotein</keyword>
<keyword id="KW-0472">Membrane</keyword>
<keyword id="KW-0675">Receptor</keyword>
<keyword id="KW-1185">Reference proteome</keyword>
<keyword id="KW-0807">Transducer</keyword>
<keyword id="KW-0812">Transmembrane</keyword>
<keyword id="KW-1133">Transmembrane helix</keyword>
<keyword id="KW-0832">Ubl conjugation</keyword>
<protein>
    <recommendedName>
        <fullName>Adenosine receptor A2a</fullName>
    </recommendedName>
</protein>
<organism>
    <name type="scientific">Canis lupus familiaris</name>
    <name type="common">Dog</name>
    <name type="synonym">Canis familiaris</name>
    <dbReference type="NCBI Taxonomy" id="9615"/>
    <lineage>
        <taxon>Eukaryota</taxon>
        <taxon>Metazoa</taxon>
        <taxon>Chordata</taxon>
        <taxon>Craniata</taxon>
        <taxon>Vertebrata</taxon>
        <taxon>Euteleostomi</taxon>
        <taxon>Mammalia</taxon>
        <taxon>Eutheria</taxon>
        <taxon>Laurasiatheria</taxon>
        <taxon>Carnivora</taxon>
        <taxon>Caniformia</taxon>
        <taxon>Canidae</taxon>
        <taxon>Canis</taxon>
    </lineage>
</organism>
<gene>
    <name type="primary">ADORA2A</name>
    <name type="synonym">RDC8</name>
</gene>
<evidence type="ECO:0000250" key="1"/>
<evidence type="ECO:0000250" key="2">
    <source>
        <dbReference type="UniProtKB" id="P29274"/>
    </source>
</evidence>
<evidence type="ECO:0000250" key="3">
    <source>
        <dbReference type="UniProtKB" id="P30543"/>
    </source>
</evidence>
<evidence type="ECO:0000255" key="4"/>
<evidence type="ECO:0000255" key="5">
    <source>
        <dbReference type="PROSITE-ProRule" id="PRU00521"/>
    </source>
</evidence>
<evidence type="ECO:0000256" key="6">
    <source>
        <dbReference type="SAM" id="MobiDB-lite"/>
    </source>
</evidence>
<evidence type="ECO:0000269" key="7">
    <source>
    </source>
</evidence>
<feature type="chain" id="PRO_0000068996" description="Adenosine receptor A2a">
    <location>
        <begin position="1"/>
        <end position="412"/>
    </location>
</feature>
<feature type="topological domain" description="Extracellular" evidence="1">
    <location>
        <begin position="1"/>
        <end position="7"/>
    </location>
</feature>
<feature type="transmembrane region" description="Helical; Name=1" evidence="1">
    <location>
        <begin position="8"/>
        <end position="32"/>
    </location>
</feature>
<feature type="topological domain" description="Cytoplasmic" evidence="1">
    <location>
        <begin position="33"/>
        <end position="42"/>
    </location>
</feature>
<feature type="transmembrane region" description="Helical; Name=2" evidence="1">
    <location>
        <begin position="43"/>
        <end position="66"/>
    </location>
</feature>
<feature type="topological domain" description="Extracellular" evidence="1">
    <location>
        <begin position="67"/>
        <end position="77"/>
    </location>
</feature>
<feature type="transmembrane region" description="Helical; Name=3" evidence="1">
    <location>
        <begin position="78"/>
        <end position="100"/>
    </location>
</feature>
<feature type="topological domain" description="Cytoplasmic" evidence="1">
    <location>
        <begin position="101"/>
        <end position="120"/>
    </location>
</feature>
<feature type="transmembrane region" description="Helical; Name=4" evidence="1">
    <location>
        <begin position="121"/>
        <end position="143"/>
    </location>
</feature>
<feature type="topological domain" description="Extracellular" evidence="1">
    <location>
        <begin position="144"/>
        <end position="173"/>
    </location>
</feature>
<feature type="transmembrane region" description="Helical; Name=5" evidence="1">
    <location>
        <begin position="174"/>
        <end position="198"/>
    </location>
</feature>
<feature type="topological domain" description="Cytoplasmic" evidence="1">
    <location>
        <begin position="199"/>
        <end position="234"/>
    </location>
</feature>
<feature type="transmembrane region" description="Helical; Name=6" evidence="1">
    <location>
        <begin position="235"/>
        <end position="258"/>
    </location>
</feature>
<feature type="topological domain" description="Extracellular" evidence="1">
    <location>
        <begin position="259"/>
        <end position="266"/>
    </location>
</feature>
<feature type="transmembrane region" description="Helical; Name=7" evidence="1">
    <location>
        <begin position="267"/>
        <end position="290"/>
    </location>
</feature>
<feature type="topological domain" description="Cytoplasmic" evidence="1">
    <location>
        <begin position="291"/>
        <end position="412"/>
    </location>
</feature>
<feature type="region of interest" description="Disordered" evidence="6">
    <location>
        <begin position="392"/>
        <end position="412"/>
    </location>
</feature>
<feature type="binding site" evidence="2">
    <location>
        <position position="169"/>
    </location>
    <ligand>
        <name>adenosine</name>
        <dbReference type="ChEBI" id="CHEBI:16335"/>
        <note>agonist</note>
    </ligand>
</feature>
<feature type="binding site" evidence="2">
    <location>
        <position position="253"/>
    </location>
    <ligand>
        <name>adenosine</name>
        <dbReference type="ChEBI" id="CHEBI:16335"/>
        <note>agonist</note>
    </ligand>
</feature>
<feature type="binding site" evidence="2">
    <location>
        <position position="277"/>
    </location>
    <ligand>
        <name>adenosine</name>
        <dbReference type="ChEBI" id="CHEBI:16335"/>
        <note>agonist</note>
    </ligand>
</feature>
<feature type="binding site" evidence="2">
    <location>
        <position position="278"/>
    </location>
    <ligand>
        <name>adenosine</name>
        <dbReference type="ChEBI" id="CHEBI:16335"/>
        <note>agonist</note>
    </ligand>
</feature>
<feature type="glycosylation site" description="N-linked (GlcNAc...) asparagine" evidence="4">
    <location>
        <position position="145"/>
    </location>
</feature>
<feature type="glycosylation site" description="N-linked (GlcNAc...) asparagine" evidence="4">
    <location>
        <position position="154"/>
    </location>
</feature>
<feature type="disulfide bond" evidence="5">
    <location>
        <begin position="71"/>
        <end position="159"/>
    </location>
</feature>
<feature type="disulfide bond" evidence="5">
    <location>
        <begin position="74"/>
        <end position="146"/>
    </location>
</feature>
<feature type="disulfide bond" evidence="5">
    <location>
        <begin position="77"/>
        <end position="166"/>
    </location>
</feature>
<feature type="disulfide bond" evidence="5">
    <location>
        <begin position="259"/>
        <end position="262"/>
    </location>
</feature>
<sequence length="412" mass="45061">MSTMGSWVYITVELAIAVLAILGNVLVCWAVWLNSNLQNVTNYFVVSLAAADIAVGVLAIPFAITISTGFCAACHNCLFFACFVLVLTQSSIFSLLAIAIDRYIAIRIPLRYNGLVTGTRAKGIIAVCWVLSFAIGLTPMLGWNNCSQPKEGRNYSQGCGEGQVACLFEDVVPMNYMVYYNFFAFVLVPLLLMLGVYLRIFLAARRQLKQMESQPLPGERARSTLQKEVHAAKSLAIIVGLFALCWLPLHIINCFTFFCPECSHAPLWLMYLTIVLSHTNSVVNPFIYAYRIREFRQTFRKIIRSHVLRRREPFKAGGTSARALAAHGSDGEQISLRLNGHPPGVWANGSAPHPERRPNGYTLGLVSGGIAPESHGDMGLPDVELLSHELKGACPESPGLEGPLAQDGAGVS</sequence>
<comment type="function">
    <text evidence="7">Receptor for adenosine (PubMed:2125216). The activity of this receptor is mediated by G proteins which activate adenylyl cyclase (PubMed:2125216).</text>
</comment>
<comment type="subunit">
    <text evidence="2 3">Interacts (via cytoplasmic C-terminal domain) with USP4; the interaction is direct (By similarity). May interact with DRD4 (By similarity). Interacts with NECAB2 (By similarity). Interacts (via cytoplasmic C-terminal domain) with GAS2L2; interaction enhances receptor-mediated adenylyl cyclase activity (By similarity).</text>
</comment>
<comment type="subcellular location">
    <subcellularLocation>
        <location evidence="3">Cell membrane</location>
        <topology evidence="3">Multi-pass membrane protein</topology>
    </subcellularLocation>
    <text evidence="3">Colocalizes with GAS2L2 at neuronal processes.</text>
</comment>
<comment type="domain">
    <text evidence="1">The cytoplasmic C-terminal domain is necessary for targeting the non-ubiquitinated form of this protein to the cell surface.</text>
</comment>
<comment type="PTM">
    <text evidence="1">Ubiquitinated. Deubiquitinated by USP4; leading to stabilization and expression at the cell surface (By similarity).</text>
</comment>
<comment type="similarity">
    <text evidence="5">Belongs to the G-protein coupled receptor 1 family.</text>
</comment>
<proteinExistence type="evidence at transcript level"/>